<accession>C1AFY6</accession>
<dbReference type="EC" id="1.1.1.267" evidence="1"/>
<dbReference type="EMBL" id="AP010918">
    <property type="protein sequence ID" value="BAH27165.1"/>
    <property type="molecule type" value="Genomic_DNA"/>
</dbReference>
<dbReference type="RefSeq" id="WP_003414613.1">
    <property type="nucleotide sequence ID" value="NZ_CP014566.1"/>
</dbReference>
<dbReference type="SMR" id="C1AFY6"/>
<dbReference type="GeneID" id="45426858"/>
<dbReference type="KEGG" id="mbt:JTY_2887"/>
<dbReference type="HOGENOM" id="CLU_035714_4_0_11"/>
<dbReference type="UniPathway" id="UPA00056">
    <property type="reaction ID" value="UER00092"/>
</dbReference>
<dbReference type="GO" id="GO:0030604">
    <property type="term" value="F:1-deoxy-D-xylulose-5-phosphate reductoisomerase activity"/>
    <property type="evidence" value="ECO:0007669"/>
    <property type="project" value="UniProtKB-UniRule"/>
</dbReference>
<dbReference type="GO" id="GO:0030145">
    <property type="term" value="F:manganese ion binding"/>
    <property type="evidence" value="ECO:0007669"/>
    <property type="project" value="TreeGrafter"/>
</dbReference>
<dbReference type="GO" id="GO:0070402">
    <property type="term" value="F:NADPH binding"/>
    <property type="evidence" value="ECO:0007669"/>
    <property type="project" value="InterPro"/>
</dbReference>
<dbReference type="GO" id="GO:0051484">
    <property type="term" value="P:isopentenyl diphosphate biosynthetic process, methylerythritol 4-phosphate pathway involved in terpenoid biosynthetic process"/>
    <property type="evidence" value="ECO:0007669"/>
    <property type="project" value="TreeGrafter"/>
</dbReference>
<dbReference type="FunFam" id="1.10.1740.10:FF:000024">
    <property type="entry name" value="1-deoxy-D-xylulose 5-phosphate reductoisomerase"/>
    <property type="match status" value="1"/>
</dbReference>
<dbReference type="FunFam" id="3.40.50.720:FF:000045">
    <property type="entry name" value="1-deoxy-D-xylulose 5-phosphate reductoisomerase"/>
    <property type="match status" value="1"/>
</dbReference>
<dbReference type="Gene3D" id="1.10.1740.10">
    <property type="match status" value="1"/>
</dbReference>
<dbReference type="Gene3D" id="3.40.50.720">
    <property type="entry name" value="NAD(P)-binding Rossmann-like Domain"/>
    <property type="match status" value="1"/>
</dbReference>
<dbReference type="HAMAP" id="MF_00183">
    <property type="entry name" value="DXP_reductoisom"/>
    <property type="match status" value="1"/>
</dbReference>
<dbReference type="InterPro" id="IPR003821">
    <property type="entry name" value="DXP_reductoisomerase"/>
</dbReference>
<dbReference type="InterPro" id="IPR013644">
    <property type="entry name" value="DXP_reductoisomerase_C"/>
</dbReference>
<dbReference type="InterPro" id="IPR013512">
    <property type="entry name" value="DXP_reductoisomerase_N"/>
</dbReference>
<dbReference type="InterPro" id="IPR026877">
    <property type="entry name" value="DXPR_C"/>
</dbReference>
<dbReference type="InterPro" id="IPR036169">
    <property type="entry name" value="DXPR_C_sf"/>
</dbReference>
<dbReference type="InterPro" id="IPR036291">
    <property type="entry name" value="NAD(P)-bd_dom_sf"/>
</dbReference>
<dbReference type="NCBIfam" id="TIGR00243">
    <property type="entry name" value="Dxr"/>
    <property type="match status" value="1"/>
</dbReference>
<dbReference type="PANTHER" id="PTHR30525">
    <property type="entry name" value="1-DEOXY-D-XYLULOSE 5-PHOSPHATE REDUCTOISOMERASE"/>
    <property type="match status" value="1"/>
</dbReference>
<dbReference type="PANTHER" id="PTHR30525:SF0">
    <property type="entry name" value="1-DEOXY-D-XYLULOSE 5-PHOSPHATE REDUCTOISOMERASE, CHLOROPLASTIC"/>
    <property type="match status" value="1"/>
</dbReference>
<dbReference type="Pfam" id="PF08436">
    <property type="entry name" value="DXP_redisom_C"/>
    <property type="match status" value="1"/>
</dbReference>
<dbReference type="Pfam" id="PF02670">
    <property type="entry name" value="DXP_reductoisom"/>
    <property type="match status" value="1"/>
</dbReference>
<dbReference type="Pfam" id="PF13288">
    <property type="entry name" value="DXPR_C"/>
    <property type="match status" value="1"/>
</dbReference>
<dbReference type="PIRSF" id="PIRSF006205">
    <property type="entry name" value="Dxp_reductismrs"/>
    <property type="match status" value="1"/>
</dbReference>
<dbReference type="SUPFAM" id="SSF69055">
    <property type="entry name" value="1-deoxy-D-xylulose-5-phosphate reductoisomerase, C-terminal domain"/>
    <property type="match status" value="1"/>
</dbReference>
<dbReference type="SUPFAM" id="SSF55347">
    <property type="entry name" value="Glyceraldehyde-3-phosphate dehydrogenase-like, C-terminal domain"/>
    <property type="match status" value="1"/>
</dbReference>
<dbReference type="SUPFAM" id="SSF51735">
    <property type="entry name" value="NAD(P)-binding Rossmann-fold domains"/>
    <property type="match status" value="1"/>
</dbReference>
<sequence length="413" mass="42853">MTNSTDGRADGRLRVVVLGSTGSIGTQALQVIADNPDRFEVVGLAAGGAHLDTLLRQRAQTGVTNIAVADEHAAQRVGDIPYHGSDAATRLVEQTEADVVLNALVGALGLRPTLAALKTGARLALANKESLVAGGSLVLRAARPGQIVPVDSEHSALAQCLRGGTPDEVAKLVLTASGGPFRGWSAADLEHVTPEQAGAHPTWSMGPMNTLNSASLVNKGLEVIETHLLFGIPYDRIDVVVHPQSIIHSMVTFIDGSTIAQASPPDMKLPISLALGWPRRVSGAAAACDFHTASSWEFEPLDTDVFPAVELARQAGVAGGCMTAVYNAANEEAAAAFLAGRIGFPAIVGIIADVLHAADQWAVEPATVDDVLDAQRWARERAQRAVSGMASVAIASTAKPGAAGRHASTLERS</sequence>
<comment type="function">
    <text evidence="1">Catalyzes the NADPH-dependent rearrangement and reduction of 1-deoxy-D-xylulose-5-phosphate (DXP) to 2-C-methyl-D-erythritol 4-phosphate (MEP).</text>
</comment>
<comment type="catalytic activity">
    <reaction evidence="1">
        <text>2-C-methyl-D-erythritol 4-phosphate + NADP(+) = 1-deoxy-D-xylulose 5-phosphate + NADPH + H(+)</text>
        <dbReference type="Rhea" id="RHEA:13717"/>
        <dbReference type="ChEBI" id="CHEBI:15378"/>
        <dbReference type="ChEBI" id="CHEBI:57783"/>
        <dbReference type="ChEBI" id="CHEBI:57792"/>
        <dbReference type="ChEBI" id="CHEBI:58262"/>
        <dbReference type="ChEBI" id="CHEBI:58349"/>
        <dbReference type="EC" id="1.1.1.267"/>
    </reaction>
    <physiologicalReaction direction="right-to-left" evidence="1">
        <dbReference type="Rhea" id="RHEA:13719"/>
    </physiologicalReaction>
</comment>
<comment type="cofactor">
    <cofactor evidence="1">
        <name>Mg(2+)</name>
        <dbReference type="ChEBI" id="CHEBI:18420"/>
    </cofactor>
    <cofactor evidence="1">
        <name>Mn(2+)</name>
        <dbReference type="ChEBI" id="CHEBI:29035"/>
    </cofactor>
</comment>
<comment type="pathway">
    <text evidence="1">Isoprenoid biosynthesis; isopentenyl diphosphate biosynthesis via DXP pathway; isopentenyl diphosphate from 1-deoxy-D-xylulose 5-phosphate: step 1/6.</text>
</comment>
<comment type="similarity">
    <text evidence="1">Belongs to the DXR family.</text>
</comment>
<proteinExistence type="inferred from homology"/>
<gene>
    <name evidence="1" type="primary">dxr</name>
    <name type="ordered locus">JTY_2887</name>
</gene>
<keyword id="KW-0414">Isoprene biosynthesis</keyword>
<keyword id="KW-0464">Manganese</keyword>
<keyword id="KW-0479">Metal-binding</keyword>
<keyword id="KW-0521">NADP</keyword>
<keyword id="KW-0560">Oxidoreductase</keyword>
<evidence type="ECO:0000255" key="1">
    <source>
        <dbReference type="HAMAP-Rule" id="MF_00183"/>
    </source>
</evidence>
<organism>
    <name type="scientific">Mycobacterium bovis (strain BCG / Tokyo 172 / ATCC 35737 / TMC 1019)</name>
    <dbReference type="NCBI Taxonomy" id="561275"/>
    <lineage>
        <taxon>Bacteria</taxon>
        <taxon>Bacillati</taxon>
        <taxon>Actinomycetota</taxon>
        <taxon>Actinomycetes</taxon>
        <taxon>Mycobacteriales</taxon>
        <taxon>Mycobacteriaceae</taxon>
        <taxon>Mycobacterium</taxon>
        <taxon>Mycobacterium tuberculosis complex</taxon>
    </lineage>
</organism>
<protein>
    <recommendedName>
        <fullName evidence="1">1-deoxy-D-xylulose 5-phosphate reductoisomerase</fullName>
        <shortName evidence="1">DXP reductoisomerase</shortName>
        <ecNumber evidence="1">1.1.1.267</ecNumber>
    </recommendedName>
    <alternativeName>
        <fullName evidence="1">1-deoxyxylulose-5-phosphate reductoisomerase</fullName>
    </alternativeName>
    <alternativeName>
        <fullName evidence="1">2-C-methyl-D-erythritol 4-phosphate synthase</fullName>
    </alternativeName>
</protein>
<feature type="chain" id="PRO_1000124100" description="1-deoxy-D-xylulose 5-phosphate reductoisomerase">
    <location>
        <begin position="1"/>
        <end position="413"/>
    </location>
</feature>
<feature type="binding site" evidence="1">
    <location>
        <position position="21"/>
    </location>
    <ligand>
        <name>NADPH</name>
        <dbReference type="ChEBI" id="CHEBI:57783"/>
    </ligand>
</feature>
<feature type="binding site" evidence="1">
    <location>
        <position position="22"/>
    </location>
    <ligand>
        <name>NADPH</name>
        <dbReference type="ChEBI" id="CHEBI:57783"/>
    </ligand>
</feature>
<feature type="binding site" evidence="1">
    <location>
        <position position="23"/>
    </location>
    <ligand>
        <name>NADPH</name>
        <dbReference type="ChEBI" id="CHEBI:57783"/>
    </ligand>
</feature>
<feature type="binding site" evidence="1">
    <location>
        <position position="24"/>
    </location>
    <ligand>
        <name>NADPH</name>
        <dbReference type="ChEBI" id="CHEBI:57783"/>
    </ligand>
</feature>
<feature type="binding site" evidence="1">
    <location>
        <position position="47"/>
    </location>
    <ligand>
        <name>NADPH</name>
        <dbReference type="ChEBI" id="CHEBI:57783"/>
    </ligand>
</feature>
<feature type="binding site" evidence="1">
    <location>
        <position position="127"/>
    </location>
    <ligand>
        <name>NADPH</name>
        <dbReference type="ChEBI" id="CHEBI:57783"/>
    </ligand>
</feature>
<feature type="binding site" evidence="1">
    <location>
        <position position="128"/>
    </location>
    <ligand>
        <name>1-deoxy-D-xylulose 5-phosphate</name>
        <dbReference type="ChEBI" id="CHEBI:57792"/>
    </ligand>
</feature>
<feature type="binding site" evidence="1">
    <location>
        <position position="129"/>
    </location>
    <ligand>
        <name>NADPH</name>
        <dbReference type="ChEBI" id="CHEBI:57783"/>
    </ligand>
</feature>
<feature type="binding site" evidence="1">
    <location>
        <position position="151"/>
    </location>
    <ligand>
        <name>Mn(2+)</name>
        <dbReference type="ChEBI" id="CHEBI:29035"/>
    </ligand>
</feature>
<feature type="binding site" evidence="1">
    <location>
        <position position="152"/>
    </location>
    <ligand>
        <name>1-deoxy-D-xylulose 5-phosphate</name>
        <dbReference type="ChEBI" id="CHEBI:57792"/>
    </ligand>
</feature>
<feature type="binding site" evidence="1">
    <location>
        <position position="153"/>
    </location>
    <ligand>
        <name>1-deoxy-D-xylulose 5-phosphate</name>
        <dbReference type="ChEBI" id="CHEBI:57792"/>
    </ligand>
</feature>
<feature type="binding site" evidence="1">
    <location>
        <position position="153"/>
    </location>
    <ligand>
        <name>Mn(2+)</name>
        <dbReference type="ChEBI" id="CHEBI:29035"/>
    </ligand>
</feature>
<feature type="binding site" evidence="1">
    <location>
        <position position="177"/>
    </location>
    <ligand>
        <name>1-deoxy-D-xylulose 5-phosphate</name>
        <dbReference type="ChEBI" id="CHEBI:57792"/>
    </ligand>
</feature>
<feature type="binding site" evidence="1">
    <location>
        <position position="200"/>
    </location>
    <ligand>
        <name>1-deoxy-D-xylulose 5-phosphate</name>
        <dbReference type="ChEBI" id="CHEBI:57792"/>
    </ligand>
</feature>
<feature type="binding site" evidence="1">
    <location>
        <position position="206"/>
    </location>
    <ligand>
        <name>NADPH</name>
        <dbReference type="ChEBI" id="CHEBI:57783"/>
    </ligand>
</feature>
<feature type="binding site" evidence="1">
    <location>
        <position position="213"/>
    </location>
    <ligand>
        <name>1-deoxy-D-xylulose 5-phosphate</name>
        <dbReference type="ChEBI" id="CHEBI:57792"/>
    </ligand>
</feature>
<feature type="binding site" evidence="1">
    <location>
        <position position="218"/>
    </location>
    <ligand>
        <name>1-deoxy-D-xylulose 5-phosphate</name>
        <dbReference type="ChEBI" id="CHEBI:57792"/>
    </ligand>
</feature>
<feature type="binding site" evidence="1">
    <location>
        <position position="219"/>
    </location>
    <ligand>
        <name>1-deoxy-D-xylulose 5-phosphate</name>
        <dbReference type="ChEBI" id="CHEBI:57792"/>
    </ligand>
</feature>
<feature type="binding site" evidence="1">
    <location>
        <position position="222"/>
    </location>
    <ligand>
        <name>1-deoxy-D-xylulose 5-phosphate</name>
        <dbReference type="ChEBI" id="CHEBI:57792"/>
    </ligand>
</feature>
<feature type="binding site" evidence="1">
    <location>
        <position position="222"/>
    </location>
    <ligand>
        <name>Mn(2+)</name>
        <dbReference type="ChEBI" id="CHEBI:29035"/>
    </ligand>
</feature>
<reference key="1">
    <citation type="journal article" date="2009" name="Vaccine">
        <title>Whole genome sequence analysis of Mycobacterium bovis bacillus Calmette-Guerin (BCG) Tokyo 172: a comparative study of BCG vaccine substrains.</title>
        <authorList>
            <person name="Seki M."/>
            <person name="Honda I."/>
            <person name="Fujita I."/>
            <person name="Yano I."/>
            <person name="Yamamoto S."/>
            <person name="Koyama A."/>
        </authorList>
    </citation>
    <scope>NUCLEOTIDE SEQUENCE [LARGE SCALE GENOMIC DNA]</scope>
    <source>
        <strain>BCG / Tokyo 172 / ATCC 35737 / TMC 1019</strain>
    </source>
</reference>
<name>DXR_MYCBT</name>